<keyword id="KW-0547">Nucleotide-binding</keyword>
<comment type="function">
    <text evidence="1">Nucleotide-binding protein.</text>
</comment>
<comment type="similarity">
    <text evidence="1">Belongs to the YajQ family.</text>
</comment>
<name>Y6074_PARS2</name>
<sequence length="162" mass="18011">MADPSFDIVSKVDTQEIDNAVNQTAKEIKTRFDFRDTGASAALSGESILLQANSEDRVKAVLDVLQEKFVKRGISLKSLEHGEPRQSGKEYKLTVTVQQGIADEKAKAIAKKIRADGPKGVQAQIQGDQLRVTGKKRDDLQRVIQLLKAEDFDVPLQFVNYR</sequence>
<organism>
    <name type="scientific">Parafrankia sp. (strain EAN1pec)</name>
    <dbReference type="NCBI Taxonomy" id="298653"/>
    <lineage>
        <taxon>Bacteria</taxon>
        <taxon>Bacillati</taxon>
        <taxon>Actinomycetota</taxon>
        <taxon>Actinomycetes</taxon>
        <taxon>Frankiales</taxon>
        <taxon>Frankiaceae</taxon>
        <taxon>Parafrankia</taxon>
    </lineage>
</organism>
<accession>A8LC81</accession>
<feature type="chain" id="PRO_1000130628" description="Nucleotide-binding protein Franean1_6074">
    <location>
        <begin position="1"/>
        <end position="162"/>
    </location>
</feature>
<dbReference type="EMBL" id="CP000820">
    <property type="protein sequence ID" value="ABW15418.1"/>
    <property type="molecule type" value="Genomic_DNA"/>
</dbReference>
<dbReference type="RefSeq" id="WP_020463499.1">
    <property type="nucleotide sequence ID" value="NC_009921.1"/>
</dbReference>
<dbReference type="SMR" id="A8LC81"/>
<dbReference type="STRING" id="298653.Franean1_6074"/>
<dbReference type="KEGG" id="fre:Franean1_6074"/>
<dbReference type="eggNOG" id="COG1666">
    <property type="taxonomic scope" value="Bacteria"/>
</dbReference>
<dbReference type="HOGENOM" id="CLU_099839_0_0_11"/>
<dbReference type="GO" id="GO:0005829">
    <property type="term" value="C:cytosol"/>
    <property type="evidence" value="ECO:0007669"/>
    <property type="project" value="TreeGrafter"/>
</dbReference>
<dbReference type="GO" id="GO:0000166">
    <property type="term" value="F:nucleotide binding"/>
    <property type="evidence" value="ECO:0007669"/>
    <property type="project" value="TreeGrafter"/>
</dbReference>
<dbReference type="CDD" id="cd11740">
    <property type="entry name" value="YajQ_like"/>
    <property type="match status" value="1"/>
</dbReference>
<dbReference type="Gene3D" id="3.30.70.860">
    <property type="match status" value="1"/>
</dbReference>
<dbReference type="Gene3D" id="3.30.70.990">
    <property type="entry name" value="YajQ-like, domain 2"/>
    <property type="match status" value="1"/>
</dbReference>
<dbReference type="HAMAP" id="MF_00632">
    <property type="entry name" value="YajQ"/>
    <property type="match status" value="1"/>
</dbReference>
<dbReference type="InterPro" id="IPR007551">
    <property type="entry name" value="DUF520"/>
</dbReference>
<dbReference type="InterPro" id="IPR035571">
    <property type="entry name" value="UPF0234-like_C"/>
</dbReference>
<dbReference type="InterPro" id="IPR035570">
    <property type="entry name" value="UPF0234_N"/>
</dbReference>
<dbReference type="InterPro" id="IPR036183">
    <property type="entry name" value="YajQ-like_sf"/>
</dbReference>
<dbReference type="NCBIfam" id="NF003819">
    <property type="entry name" value="PRK05412.1"/>
    <property type="match status" value="1"/>
</dbReference>
<dbReference type="PANTHER" id="PTHR30476">
    <property type="entry name" value="UPF0234 PROTEIN YAJQ"/>
    <property type="match status" value="1"/>
</dbReference>
<dbReference type="PANTHER" id="PTHR30476:SF0">
    <property type="entry name" value="UPF0234 PROTEIN YAJQ"/>
    <property type="match status" value="1"/>
</dbReference>
<dbReference type="Pfam" id="PF04461">
    <property type="entry name" value="DUF520"/>
    <property type="match status" value="1"/>
</dbReference>
<dbReference type="SUPFAM" id="SSF89963">
    <property type="entry name" value="YajQ-like"/>
    <property type="match status" value="2"/>
</dbReference>
<gene>
    <name type="ordered locus">Franean1_6074</name>
</gene>
<reference key="1">
    <citation type="journal article" date="2007" name="Genome Res.">
        <title>Genome characteristics of facultatively symbiotic Frankia sp. strains reflect host range and host plant biogeography.</title>
        <authorList>
            <person name="Normand P."/>
            <person name="Lapierre P."/>
            <person name="Tisa L.S."/>
            <person name="Gogarten J.P."/>
            <person name="Alloisio N."/>
            <person name="Bagnarol E."/>
            <person name="Bassi C.A."/>
            <person name="Berry A.M."/>
            <person name="Bickhart D.M."/>
            <person name="Choisne N."/>
            <person name="Couloux A."/>
            <person name="Cournoyer B."/>
            <person name="Cruveiller S."/>
            <person name="Daubin V."/>
            <person name="Demange N."/>
            <person name="Francino M.P."/>
            <person name="Goltsman E."/>
            <person name="Huang Y."/>
            <person name="Kopp O.R."/>
            <person name="Labarre L."/>
            <person name="Lapidus A."/>
            <person name="Lavire C."/>
            <person name="Marechal J."/>
            <person name="Martinez M."/>
            <person name="Mastronunzio J.E."/>
            <person name="Mullin B.C."/>
            <person name="Niemann J."/>
            <person name="Pujic P."/>
            <person name="Rawnsley T."/>
            <person name="Rouy Z."/>
            <person name="Schenowitz C."/>
            <person name="Sellstedt A."/>
            <person name="Tavares F."/>
            <person name="Tomkins J.P."/>
            <person name="Vallenet D."/>
            <person name="Valverde C."/>
            <person name="Wall L.G."/>
            <person name="Wang Y."/>
            <person name="Medigue C."/>
            <person name="Benson D.R."/>
        </authorList>
    </citation>
    <scope>NUCLEOTIDE SEQUENCE [LARGE SCALE GENOMIC DNA]</scope>
    <source>
        <strain>EAN1pec</strain>
    </source>
</reference>
<proteinExistence type="inferred from homology"/>
<protein>
    <recommendedName>
        <fullName evidence="1">Nucleotide-binding protein Franean1_6074</fullName>
    </recommendedName>
</protein>
<evidence type="ECO:0000255" key="1">
    <source>
        <dbReference type="HAMAP-Rule" id="MF_00632"/>
    </source>
</evidence>